<dbReference type="EMBL" id="AF005496">
    <property type="protein sequence ID" value="AAD03186.1"/>
    <property type="molecule type" value="Genomic_DNA"/>
</dbReference>
<dbReference type="SMR" id="O70898"/>
<dbReference type="Proteomes" id="UP000007685">
    <property type="component" value="Segment"/>
</dbReference>
<dbReference type="GO" id="GO:0043657">
    <property type="term" value="C:host cell"/>
    <property type="evidence" value="ECO:0007669"/>
    <property type="project" value="GOC"/>
</dbReference>
<dbReference type="GO" id="GO:0042025">
    <property type="term" value="C:host cell nucleus"/>
    <property type="evidence" value="ECO:0007669"/>
    <property type="project" value="UniProtKB-SubCell"/>
</dbReference>
<dbReference type="GO" id="GO:0043655">
    <property type="term" value="C:host extracellular space"/>
    <property type="evidence" value="ECO:0007669"/>
    <property type="project" value="UniProtKB-SubCell"/>
</dbReference>
<dbReference type="GO" id="GO:0044423">
    <property type="term" value="C:virion component"/>
    <property type="evidence" value="ECO:0007669"/>
    <property type="project" value="UniProtKB-UniRule"/>
</dbReference>
<dbReference type="GO" id="GO:0006351">
    <property type="term" value="P:DNA-templated transcription"/>
    <property type="evidence" value="ECO:0007669"/>
    <property type="project" value="UniProtKB-UniRule"/>
</dbReference>
<dbReference type="GO" id="GO:0034220">
    <property type="term" value="P:monoatomic ion transmembrane transport"/>
    <property type="evidence" value="ECO:0007669"/>
    <property type="project" value="UniProtKB-KW"/>
</dbReference>
<dbReference type="GO" id="GO:0051260">
    <property type="term" value="P:protein homooligomerization"/>
    <property type="evidence" value="ECO:0007669"/>
    <property type="project" value="UniProtKB-UniRule"/>
</dbReference>
<dbReference type="GO" id="GO:0006355">
    <property type="term" value="P:regulation of DNA-templated transcription"/>
    <property type="evidence" value="ECO:0007669"/>
    <property type="project" value="UniProtKB-UniRule"/>
</dbReference>
<dbReference type="GO" id="GO:0046718">
    <property type="term" value="P:symbiont entry into host cell"/>
    <property type="evidence" value="ECO:0007669"/>
    <property type="project" value="UniProtKB-KW"/>
</dbReference>
<dbReference type="GO" id="GO:0052151">
    <property type="term" value="P:symbiont-mediated activation of host apoptosis"/>
    <property type="evidence" value="ECO:0007669"/>
    <property type="project" value="UniProtKB-UniRule"/>
</dbReference>
<dbReference type="GO" id="GO:0039592">
    <property type="term" value="P:symbiont-mediated arrest of host cell cycle during G2/M transition"/>
    <property type="evidence" value="ECO:0007669"/>
    <property type="project" value="UniProtKB-UniRule"/>
</dbReference>
<dbReference type="GO" id="GO:0075732">
    <property type="term" value="P:viral penetration into host nucleus"/>
    <property type="evidence" value="ECO:0007669"/>
    <property type="project" value="UniProtKB-UniRule"/>
</dbReference>
<dbReference type="Gene3D" id="6.10.210.10">
    <property type="match status" value="1"/>
</dbReference>
<dbReference type="Gene3D" id="1.20.5.90">
    <property type="entry name" value="VpR/VpX protein, C-terminal domain"/>
    <property type="match status" value="1"/>
</dbReference>
<dbReference type="HAMAP" id="MF_04080">
    <property type="entry name" value="HIV_VPR"/>
    <property type="match status" value="1"/>
</dbReference>
<dbReference type="InterPro" id="IPR000012">
    <property type="entry name" value="RetroV_VpR/X"/>
</dbReference>
<dbReference type="Pfam" id="PF00522">
    <property type="entry name" value="VPR"/>
    <property type="match status" value="1"/>
</dbReference>
<dbReference type="PRINTS" id="PR00444">
    <property type="entry name" value="HIVVPRVPX"/>
</dbReference>
<accession>O70898</accession>
<reference key="1">
    <citation type="journal article" date="1998" name="J. Virol.">
        <title>A comprehensive panel of near-full-length clones and reference sequences for non-subtype B isolates of human immunodeficiency virus type 1.</title>
        <authorList>
            <person name="Gao F."/>
            <person name="Robertson D.L."/>
            <person name="Carruthers C.D."/>
            <person name="Morrison S.G."/>
            <person name="Jian B."/>
            <person name="Chen Y."/>
            <person name="Barre-Sinoussi F."/>
            <person name="Girard M."/>
            <person name="Srinivasan A."/>
            <person name="Abimiku A.G."/>
            <person name="Shaw G.M."/>
            <person name="Sharp P.M."/>
            <person name="Hahn B.H."/>
        </authorList>
    </citation>
    <scope>NUCLEOTIDE SEQUENCE [GENOMIC DNA]</scope>
</reference>
<proteinExistence type="inferred from homology"/>
<keyword id="KW-0010">Activator</keyword>
<keyword id="KW-0014">AIDS</keyword>
<keyword id="KW-0053">Apoptosis</keyword>
<keyword id="KW-0131">Cell cycle</keyword>
<keyword id="KW-1079">Host G2/M cell cycle arrest by virus</keyword>
<keyword id="KW-1048">Host nucleus</keyword>
<keyword id="KW-0945">Host-virus interaction</keyword>
<keyword id="KW-0407">Ion channel</keyword>
<keyword id="KW-0406">Ion transport</keyword>
<keyword id="KW-1121">Modulation of host cell cycle by virus</keyword>
<keyword id="KW-0597">Phosphoprotein</keyword>
<keyword id="KW-1185">Reference proteome</keyword>
<keyword id="KW-0804">Transcription</keyword>
<keyword id="KW-0805">Transcription regulation</keyword>
<keyword id="KW-0813">Transport</keyword>
<keyword id="KW-1163">Viral penetration into host nucleus</keyword>
<keyword id="KW-0946">Virion</keyword>
<keyword id="KW-1160">Virus entry into host cell</keyword>
<evidence type="ECO:0000255" key="1">
    <source>
        <dbReference type="HAMAP-Rule" id="MF_04080"/>
    </source>
</evidence>
<organismHost>
    <name type="scientific">Homo sapiens</name>
    <name type="common">Human</name>
    <dbReference type="NCBI Taxonomy" id="9606"/>
</organismHost>
<feature type="chain" id="PRO_0000246751" description="Protein Vpr">
    <location>
        <begin position="1"/>
        <end position="96"/>
    </location>
</feature>
<feature type="region of interest" description="Homooligomerization" evidence="1">
    <location>
        <begin position="1"/>
        <end position="42"/>
    </location>
</feature>
<feature type="modified residue" description="Phosphoserine; by host" evidence="1">
    <location>
        <position position="79"/>
    </location>
</feature>
<feature type="modified residue" description="Phosphoserine; by host" evidence="1">
    <location>
        <position position="94"/>
    </location>
</feature>
<feature type="modified residue" description="Phosphoserine; by host" evidence="1">
    <location>
        <position position="96"/>
    </location>
</feature>
<name>VPR_HV190</name>
<sequence>MEQAPEDQGPQREPHNEWTLELLEEIKNEAVRHFPRVWLHQLGQHIYNTYGDTWVGVEALIRTLQQLLFIHFRIGCQHSRIGITRQRRVRNGPSRS</sequence>
<gene>
    <name evidence="1" type="primary">vpr</name>
</gene>
<comment type="function">
    <text evidence="1">During virus replication, may deplete host UNG protein, and incude G2-M cell cycle arrest. Acts by targeting specific host proteins for degradation by the 26S proteasome, through association with the cellular CUL4A-DDB1 E3 ligase complex by direct interaction with host VPRPB/DCAF-1. Cell cycle arrest reportedly occurs within hours of infection and is not blocked by antiviral agents, suggesting that it is initiated by the VPR carried into the virion. Additionally, VPR induces apoptosis in a cell cycle dependent manner suggesting that these two effects are mechanistically linked. Detected in the serum and cerebrospinal fluid of AIDS patient, VPR may also induce cell death to bystander cells.</text>
</comment>
<comment type="function">
    <text evidence="1">During virus entry, plays a role in the transport of the viral pre-integration (PIC) complex to the host nucleus. This function is crucial for viral infection of non-dividing macrophages. May act directly at the nuclear pore complex, by binding nucleoporins phenylalanine-glycine (FG)-repeat regions.</text>
</comment>
<comment type="subunit">
    <text evidence="1">Homooligomer, may form homodimer. Interacts with p6-gag region of the Pr55 Gag precursor protein through a (Leu-X-X)4 motif near the C-terminus of the P6gag protein. Interacts with host UNG. May interact with host RAD23A/HHR23A. Interacts with host VPRBP/DCAF1, leading to hijack the CUL4A-RBX1-DDB1-DCAF1/VPRBP complex, mediating ubiquitination of host proteins such as TERT and ZGPAT and arrest of the cell cycle in G2 phase.</text>
</comment>
<comment type="subcellular location">
    <subcellularLocation>
        <location evidence="1">Virion</location>
    </subcellularLocation>
    <subcellularLocation>
        <location evidence="1">Host nucleus</location>
    </subcellularLocation>
    <subcellularLocation>
        <location evidence="1">Host extracellular space</location>
    </subcellularLocation>
    <text evidence="1">Incorporation into virion is dependent on p6 GAG sequences. Lacks a canonical nuclear localization signal, thus import into nucleus may function independently of the human importin pathway. Detected in high quantity in the serum and cerebrospinal fluid of AIDS patient.</text>
</comment>
<comment type="PTM">
    <text evidence="1">Phosphorylated on several residues by host. These phosphorylations regulate VPR activity for the nuclear import of the HIV-1 pre-integration complex.</text>
</comment>
<comment type="miscellaneous">
    <text evidence="1">HIV-1 lineages are divided in three main groups, M (for Major), O (for Outlier), and N (for New, or Non-M, Non-O). The vast majority of strains found worldwide belong to the group M. Group O seems to be endemic to and largely confined to Cameroon and neighboring countries in West Central Africa, where these viruses represent a small minority of HIV-1 strains. The group N is represented by a limited number of isolates from Cameroonian persons. The group M is further subdivided in 9 clades or subtypes (A to D, F to H, J and K).</text>
</comment>
<comment type="similarity">
    <text evidence="1">Belongs to the HIV-1 VPR protein family.</text>
</comment>
<organism>
    <name type="scientific">Human immunodeficiency virus type 1 group M subtype H (isolate 90CF056)</name>
    <name type="common">HIV-1</name>
    <dbReference type="NCBI Taxonomy" id="388826"/>
    <lineage>
        <taxon>Viruses</taxon>
        <taxon>Riboviria</taxon>
        <taxon>Pararnavirae</taxon>
        <taxon>Artverviricota</taxon>
        <taxon>Revtraviricetes</taxon>
        <taxon>Ortervirales</taxon>
        <taxon>Retroviridae</taxon>
        <taxon>Orthoretrovirinae</taxon>
        <taxon>Lentivirus</taxon>
        <taxon>Human immunodeficiency virus type 1</taxon>
    </lineage>
</organism>
<protein>
    <recommendedName>
        <fullName evidence="1">Protein Vpr</fullName>
    </recommendedName>
    <alternativeName>
        <fullName evidence="1">R ORF protein</fullName>
    </alternativeName>
    <alternativeName>
        <fullName evidence="1">Viral protein R</fullName>
    </alternativeName>
</protein>